<reference key="1">
    <citation type="journal article" date="2001" name="Nature">
        <title>Genome sequence of Yersinia pestis, the causative agent of plague.</title>
        <authorList>
            <person name="Parkhill J."/>
            <person name="Wren B.W."/>
            <person name="Thomson N.R."/>
            <person name="Titball R.W."/>
            <person name="Holden M.T.G."/>
            <person name="Prentice M.B."/>
            <person name="Sebaihia M."/>
            <person name="James K.D."/>
            <person name="Churcher C.M."/>
            <person name="Mungall K.L."/>
            <person name="Baker S."/>
            <person name="Basham D."/>
            <person name="Bentley S.D."/>
            <person name="Brooks K."/>
            <person name="Cerdeno-Tarraga A.-M."/>
            <person name="Chillingworth T."/>
            <person name="Cronin A."/>
            <person name="Davies R.M."/>
            <person name="Davis P."/>
            <person name="Dougan G."/>
            <person name="Feltwell T."/>
            <person name="Hamlin N."/>
            <person name="Holroyd S."/>
            <person name="Jagels K."/>
            <person name="Karlyshev A.V."/>
            <person name="Leather S."/>
            <person name="Moule S."/>
            <person name="Oyston P.C.F."/>
            <person name="Quail M.A."/>
            <person name="Rutherford K.M."/>
            <person name="Simmonds M."/>
            <person name="Skelton J."/>
            <person name="Stevens K."/>
            <person name="Whitehead S."/>
            <person name="Barrell B.G."/>
        </authorList>
    </citation>
    <scope>NUCLEOTIDE SEQUENCE [LARGE SCALE GENOMIC DNA]</scope>
    <source>
        <strain>CO-92 / Biovar Orientalis</strain>
    </source>
</reference>
<reference key="2">
    <citation type="journal article" date="2002" name="J. Bacteriol.">
        <title>Genome sequence of Yersinia pestis KIM.</title>
        <authorList>
            <person name="Deng W."/>
            <person name="Burland V."/>
            <person name="Plunkett G. III"/>
            <person name="Boutin A."/>
            <person name="Mayhew G.F."/>
            <person name="Liss P."/>
            <person name="Perna N.T."/>
            <person name="Rose D.J."/>
            <person name="Mau B."/>
            <person name="Zhou S."/>
            <person name="Schwartz D.C."/>
            <person name="Fetherston J.D."/>
            <person name="Lindler L.E."/>
            <person name="Brubaker R.R."/>
            <person name="Plano G.V."/>
            <person name="Straley S.C."/>
            <person name="McDonough K.A."/>
            <person name="Nilles M.L."/>
            <person name="Matson J.S."/>
            <person name="Blattner F.R."/>
            <person name="Perry R.D."/>
        </authorList>
    </citation>
    <scope>NUCLEOTIDE SEQUENCE [LARGE SCALE GENOMIC DNA]</scope>
    <source>
        <strain>KIM10+ / Biovar Mediaevalis</strain>
    </source>
</reference>
<reference key="3">
    <citation type="journal article" date="2004" name="DNA Res.">
        <title>Complete genome sequence of Yersinia pestis strain 91001, an isolate avirulent to humans.</title>
        <authorList>
            <person name="Song Y."/>
            <person name="Tong Z."/>
            <person name="Wang J."/>
            <person name="Wang L."/>
            <person name="Guo Z."/>
            <person name="Han Y."/>
            <person name="Zhang J."/>
            <person name="Pei D."/>
            <person name="Zhou D."/>
            <person name="Qin H."/>
            <person name="Pang X."/>
            <person name="Han Y."/>
            <person name="Zhai J."/>
            <person name="Li M."/>
            <person name="Cui B."/>
            <person name="Qi Z."/>
            <person name="Jin L."/>
            <person name="Dai R."/>
            <person name="Chen F."/>
            <person name="Li S."/>
            <person name="Ye C."/>
            <person name="Du Z."/>
            <person name="Lin W."/>
            <person name="Wang J."/>
            <person name="Yu J."/>
            <person name="Yang H."/>
            <person name="Wang J."/>
            <person name="Huang P."/>
            <person name="Yang R."/>
        </authorList>
    </citation>
    <scope>NUCLEOTIDE SEQUENCE [LARGE SCALE GENOMIC DNA]</scope>
    <source>
        <strain>91001 / Biovar Mediaevalis</strain>
    </source>
</reference>
<name>UPPS_YERPE</name>
<accession>Q8ZH61</accession>
<accession>Q0WHZ6</accession>
<organism>
    <name type="scientific">Yersinia pestis</name>
    <dbReference type="NCBI Taxonomy" id="632"/>
    <lineage>
        <taxon>Bacteria</taxon>
        <taxon>Pseudomonadati</taxon>
        <taxon>Pseudomonadota</taxon>
        <taxon>Gammaproteobacteria</taxon>
        <taxon>Enterobacterales</taxon>
        <taxon>Yersiniaceae</taxon>
        <taxon>Yersinia</taxon>
    </lineage>
</organism>
<dbReference type="EC" id="2.5.1.31" evidence="1"/>
<dbReference type="EMBL" id="AL590842">
    <property type="protein sequence ID" value="CAL19714.1"/>
    <property type="molecule type" value="Genomic_DNA"/>
</dbReference>
<dbReference type="EMBL" id="AE009952">
    <property type="protein sequence ID" value="AAM86680.1"/>
    <property type="molecule type" value="Genomic_DNA"/>
</dbReference>
<dbReference type="EMBL" id="AE017042">
    <property type="protein sequence ID" value="AAS62985.1"/>
    <property type="molecule type" value="Genomic_DNA"/>
</dbReference>
<dbReference type="PIR" id="AH0128">
    <property type="entry name" value="AH0128"/>
</dbReference>
<dbReference type="RefSeq" id="WP_002212136.1">
    <property type="nucleotide sequence ID" value="NZ_WUCM01000044.1"/>
</dbReference>
<dbReference type="RefSeq" id="YP_002346092.1">
    <property type="nucleotide sequence ID" value="NC_003143.1"/>
</dbReference>
<dbReference type="SMR" id="Q8ZH61"/>
<dbReference type="STRING" id="214092.YPO1049"/>
<dbReference type="PaxDb" id="214092-YPO1049"/>
<dbReference type="DNASU" id="1148077"/>
<dbReference type="EnsemblBacteria" id="AAS62985">
    <property type="protein sequence ID" value="AAS62985"/>
    <property type="gene ID" value="YP_2801"/>
</dbReference>
<dbReference type="GeneID" id="57977512"/>
<dbReference type="KEGG" id="ype:YPO1049"/>
<dbReference type="KEGG" id="ypk:y3130"/>
<dbReference type="KEGG" id="ypm:YP_2801"/>
<dbReference type="PATRIC" id="fig|214092.21.peg.1337"/>
<dbReference type="eggNOG" id="COG0020">
    <property type="taxonomic scope" value="Bacteria"/>
</dbReference>
<dbReference type="HOGENOM" id="CLU_038505_1_1_6"/>
<dbReference type="OMA" id="FDRRDLW"/>
<dbReference type="OrthoDB" id="4191603at2"/>
<dbReference type="Proteomes" id="UP000000815">
    <property type="component" value="Chromosome"/>
</dbReference>
<dbReference type="Proteomes" id="UP000001019">
    <property type="component" value="Chromosome"/>
</dbReference>
<dbReference type="Proteomes" id="UP000002490">
    <property type="component" value="Chromosome"/>
</dbReference>
<dbReference type="GO" id="GO:0005829">
    <property type="term" value="C:cytosol"/>
    <property type="evidence" value="ECO:0000318"/>
    <property type="project" value="GO_Central"/>
</dbReference>
<dbReference type="GO" id="GO:0008834">
    <property type="term" value="F:ditrans,polycis-undecaprenyl-diphosphate synthase [(2E,6E)-farnesyl-diphosphate specific] activity"/>
    <property type="evidence" value="ECO:0000318"/>
    <property type="project" value="GO_Central"/>
</dbReference>
<dbReference type="GO" id="GO:0000287">
    <property type="term" value="F:magnesium ion binding"/>
    <property type="evidence" value="ECO:0000318"/>
    <property type="project" value="GO_Central"/>
</dbReference>
<dbReference type="GO" id="GO:0071555">
    <property type="term" value="P:cell wall organization"/>
    <property type="evidence" value="ECO:0007669"/>
    <property type="project" value="UniProtKB-KW"/>
</dbReference>
<dbReference type="GO" id="GO:0009252">
    <property type="term" value="P:peptidoglycan biosynthetic process"/>
    <property type="evidence" value="ECO:0007669"/>
    <property type="project" value="UniProtKB-UniRule"/>
</dbReference>
<dbReference type="GO" id="GO:0016094">
    <property type="term" value="P:polyprenol biosynthetic process"/>
    <property type="evidence" value="ECO:0000318"/>
    <property type="project" value="GO_Central"/>
</dbReference>
<dbReference type="GO" id="GO:0008360">
    <property type="term" value="P:regulation of cell shape"/>
    <property type="evidence" value="ECO:0007669"/>
    <property type="project" value="UniProtKB-KW"/>
</dbReference>
<dbReference type="CDD" id="cd00475">
    <property type="entry name" value="Cis_IPPS"/>
    <property type="match status" value="1"/>
</dbReference>
<dbReference type="FunFam" id="3.40.1180.10:FF:000001">
    <property type="entry name" value="(2E,6E)-farnesyl-diphosphate-specific ditrans,polycis-undecaprenyl-diphosphate synthase"/>
    <property type="match status" value="1"/>
</dbReference>
<dbReference type="Gene3D" id="3.40.1180.10">
    <property type="entry name" value="Decaprenyl diphosphate synthase-like"/>
    <property type="match status" value="1"/>
</dbReference>
<dbReference type="HAMAP" id="MF_01139">
    <property type="entry name" value="ISPT"/>
    <property type="match status" value="1"/>
</dbReference>
<dbReference type="InterPro" id="IPR001441">
    <property type="entry name" value="UPP_synth-like"/>
</dbReference>
<dbReference type="InterPro" id="IPR018520">
    <property type="entry name" value="UPP_synth-like_CS"/>
</dbReference>
<dbReference type="InterPro" id="IPR036424">
    <property type="entry name" value="UPP_synth-like_sf"/>
</dbReference>
<dbReference type="NCBIfam" id="NF007596">
    <property type="entry name" value="PRK10240.1"/>
    <property type="match status" value="1"/>
</dbReference>
<dbReference type="NCBIfam" id="NF011405">
    <property type="entry name" value="PRK14830.1"/>
    <property type="match status" value="1"/>
</dbReference>
<dbReference type="NCBIfam" id="TIGR00055">
    <property type="entry name" value="uppS"/>
    <property type="match status" value="1"/>
</dbReference>
<dbReference type="PANTHER" id="PTHR10291:SF0">
    <property type="entry name" value="DEHYDRODOLICHYL DIPHOSPHATE SYNTHASE 2"/>
    <property type="match status" value="1"/>
</dbReference>
<dbReference type="PANTHER" id="PTHR10291">
    <property type="entry name" value="DEHYDRODOLICHYL DIPHOSPHATE SYNTHASE FAMILY MEMBER"/>
    <property type="match status" value="1"/>
</dbReference>
<dbReference type="Pfam" id="PF01255">
    <property type="entry name" value="Prenyltransf"/>
    <property type="match status" value="1"/>
</dbReference>
<dbReference type="SUPFAM" id="SSF64005">
    <property type="entry name" value="Undecaprenyl diphosphate synthase"/>
    <property type="match status" value="1"/>
</dbReference>
<dbReference type="PROSITE" id="PS01066">
    <property type="entry name" value="UPP_SYNTHASE"/>
    <property type="match status" value="1"/>
</dbReference>
<sequence length="252" mass="28528">MSPVKEDRANLSPRSPRHVAIIMDGNGRWAKNKGKLRVFGHKAGVKSVRRAVSFAAKHNLDALTLYAFSSENWNRPDQEVTALMELFVRALDSEVKSLHKHNVRLSIIGDISRFSGRLQERIRRSEKLTANNDGLKLNIAANYGGRWDIIQGVRHLAEQVQKGELQPTDISEESLNSYICLHEQSQVDLVIRTGGEHRISNFLLWQIAYAELYFTDVLWPDFDENVFEGALNAFAQRERRFGGTTPIDATAS</sequence>
<gene>
    <name evidence="1" type="primary">uppS</name>
    <name type="ordered locus">YPO1049</name>
    <name type="ordered locus">y3130</name>
    <name type="ordered locus">YP_2801</name>
</gene>
<protein>
    <recommendedName>
        <fullName evidence="1">Ditrans,polycis-undecaprenyl-diphosphate synthase ((2E,6E)-farnesyl-diphosphate specific)</fullName>
        <ecNumber evidence="1">2.5.1.31</ecNumber>
    </recommendedName>
    <alternativeName>
        <fullName evidence="1">Ditrans,polycis-undecaprenylcistransferase</fullName>
    </alternativeName>
    <alternativeName>
        <fullName evidence="1">Undecaprenyl diphosphate synthase</fullName>
        <shortName evidence="1">UDS</shortName>
    </alternativeName>
    <alternativeName>
        <fullName evidence="1">Undecaprenyl pyrophosphate synthase</fullName>
        <shortName evidence="1">UPP synthase</shortName>
    </alternativeName>
</protein>
<keyword id="KW-0133">Cell shape</keyword>
<keyword id="KW-0961">Cell wall biogenesis/degradation</keyword>
<keyword id="KW-0460">Magnesium</keyword>
<keyword id="KW-0479">Metal-binding</keyword>
<keyword id="KW-0573">Peptidoglycan synthesis</keyword>
<keyword id="KW-1185">Reference proteome</keyword>
<keyword id="KW-0808">Transferase</keyword>
<feature type="chain" id="PRO_0000123723" description="Ditrans,polycis-undecaprenyl-diphosphate synthase ((2E,6E)-farnesyl-diphosphate specific)">
    <location>
        <begin position="1"/>
        <end position="252"/>
    </location>
</feature>
<feature type="active site" evidence="1">
    <location>
        <position position="24"/>
    </location>
</feature>
<feature type="active site" description="Proton acceptor" evidence="1">
    <location>
        <position position="72"/>
    </location>
</feature>
<feature type="binding site" evidence="1">
    <location>
        <position position="24"/>
    </location>
    <ligand>
        <name>Mg(2+)</name>
        <dbReference type="ChEBI" id="CHEBI:18420"/>
    </ligand>
</feature>
<feature type="binding site" evidence="1">
    <location>
        <begin position="25"/>
        <end position="28"/>
    </location>
    <ligand>
        <name>substrate</name>
    </ligand>
</feature>
<feature type="binding site" evidence="1">
    <location>
        <position position="29"/>
    </location>
    <ligand>
        <name>substrate</name>
    </ligand>
</feature>
<feature type="binding site" evidence="1">
    <location>
        <position position="37"/>
    </location>
    <ligand>
        <name>substrate</name>
    </ligand>
</feature>
<feature type="binding site" evidence="1">
    <location>
        <position position="41"/>
    </location>
    <ligand>
        <name>substrate</name>
    </ligand>
</feature>
<feature type="binding site" evidence="1">
    <location>
        <begin position="69"/>
        <end position="71"/>
    </location>
    <ligand>
        <name>substrate</name>
    </ligand>
</feature>
<feature type="binding site" evidence="1">
    <location>
        <position position="73"/>
    </location>
    <ligand>
        <name>substrate</name>
    </ligand>
</feature>
<feature type="binding site" evidence="1">
    <location>
        <position position="75"/>
    </location>
    <ligand>
        <name>substrate</name>
    </ligand>
</feature>
<feature type="binding site" evidence="1">
    <location>
        <position position="192"/>
    </location>
    <ligand>
        <name>substrate</name>
    </ligand>
</feature>
<feature type="binding site" evidence="1">
    <location>
        <position position="197"/>
    </location>
    <ligand>
        <name>Mg(2+)</name>
        <dbReference type="ChEBI" id="CHEBI:18420"/>
    </ligand>
</feature>
<feature type="binding site" evidence="1">
    <location>
        <begin position="198"/>
        <end position="200"/>
    </location>
    <ligand>
        <name>substrate</name>
    </ligand>
</feature>
<feature type="binding site" evidence="1">
    <location>
        <position position="211"/>
    </location>
    <ligand>
        <name>Mg(2+)</name>
        <dbReference type="ChEBI" id="CHEBI:18420"/>
    </ligand>
</feature>
<evidence type="ECO:0000255" key="1">
    <source>
        <dbReference type="HAMAP-Rule" id="MF_01139"/>
    </source>
</evidence>
<proteinExistence type="inferred from homology"/>
<comment type="function">
    <text evidence="1">Catalyzes the sequential condensation of isopentenyl diphosphate (IPP) with (2E,6E)-farnesyl diphosphate (E,E-FPP) to yield (2Z,6Z,10Z,14Z,18Z,22Z,26Z,30Z,34E,38E)-undecaprenyl diphosphate (di-trans,octa-cis-UPP). UPP is the precursor of glycosyl carrier lipid in the biosynthesis of bacterial cell wall polysaccharide components such as peptidoglycan and lipopolysaccharide.</text>
</comment>
<comment type="catalytic activity">
    <reaction evidence="1">
        <text>8 isopentenyl diphosphate + (2E,6E)-farnesyl diphosphate = di-trans,octa-cis-undecaprenyl diphosphate + 8 diphosphate</text>
        <dbReference type="Rhea" id="RHEA:27551"/>
        <dbReference type="ChEBI" id="CHEBI:33019"/>
        <dbReference type="ChEBI" id="CHEBI:58405"/>
        <dbReference type="ChEBI" id="CHEBI:128769"/>
        <dbReference type="ChEBI" id="CHEBI:175763"/>
        <dbReference type="EC" id="2.5.1.31"/>
    </reaction>
</comment>
<comment type="cofactor">
    <cofactor evidence="1">
        <name>Mg(2+)</name>
        <dbReference type="ChEBI" id="CHEBI:18420"/>
    </cofactor>
    <text evidence="1">Binds 2 magnesium ions per subunit.</text>
</comment>
<comment type="subunit">
    <text evidence="1">Homodimer.</text>
</comment>
<comment type="similarity">
    <text evidence="1">Belongs to the UPP synthase family.</text>
</comment>